<gene>
    <name evidence="1" type="primary">speA</name>
    <name type="ordered locus">BT_3394</name>
</gene>
<accession>Q8A2B1</accession>
<dbReference type="EC" id="4.1.1.19" evidence="1"/>
<dbReference type="EMBL" id="AE015928">
    <property type="protein sequence ID" value="AAO78500.1"/>
    <property type="molecule type" value="Genomic_DNA"/>
</dbReference>
<dbReference type="RefSeq" id="NP_812306.1">
    <property type="nucleotide sequence ID" value="NC_004663.1"/>
</dbReference>
<dbReference type="RefSeq" id="WP_008767598.1">
    <property type="nucleotide sequence ID" value="NZ_UYXG01000003.1"/>
</dbReference>
<dbReference type="SMR" id="Q8A2B1"/>
<dbReference type="FunCoup" id="Q8A2B1">
    <property type="interactions" value="120"/>
</dbReference>
<dbReference type="STRING" id="226186.BT_3394"/>
<dbReference type="PaxDb" id="226186-BT_3394"/>
<dbReference type="DNASU" id="1075986"/>
<dbReference type="EnsemblBacteria" id="AAO78500">
    <property type="protein sequence ID" value="AAO78500"/>
    <property type="gene ID" value="BT_3394"/>
</dbReference>
<dbReference type="GeneID" id="60924573"/>
<dbReference type="KEGG" id="bth:BT_3394"/>
<dbReference type="PATRIC" id="fig|226186.12.peg.3462"/>
<dbReference type="eggNOG" id="COG1166">
    <property type="taxonomic scope" value="Bacteria"/>
</dbReference>
<dbReference type="HOGENOM" id="CLU_027243_1_0_10"/>
<dbReference type="InParanoid" id="Q8A2B1"/>
<dbReference type="OrthoDB" id="9802658at2"/>
<dbReference type="Proteomes" id="UP000001414">
    <property type="component" value="Chromosome"/>
</dbReference>
<dbReference type="GO" id="GO:0008792">
    <property type="term" value="F:arginine decarboxylase activity"/>
    <property type="evidence" value="ECO:0007669"/>
    <property type="project" value="UniProtKB-UniRule"/>
</dbReference>
<dbReference type="GO" id="GO:0046872">
    <property type="term" value="F:metal ion binding"/>
    <property type="evidence" value="ECO:0007669"/>
    <property type="project" value="UniProtKB-KW"/>
</dbReference>
<dbReference type="GO" id="GO:0006527">
    <property type="term" value="P:arginine catabolic process"/>
    <property type="evidence" value="ECO:0007669"/>
    <property type="project" value="InterPro"/>
</dbReference>
<dbReference type="GO" id="GO:0008295">
    <property type="term" value="P:spermidine biosynthetic process"/>
    <property type="evidence" value="ECO:0007669"/>
    <property type="project" value="UniProtKB-UniRule"/>
</dbReference>
<dbReference type="CDD" id="cd06830">
    <property type="entry name" value="PLPDE_III_ADC"/>
    <property type="match status" value="1"/>
</dbReference>
<dbReference type="FunFam" id="1.20.58.930:FF:000002">
    <property type="entry name" value="Biosynthetic arginine decarboxylase"/>
    <property type="match status" value="1"/>
</dbReference>
<dbReference type="FunFam" id="3.20.20.10:FF:000001">
    <property type="entry name" value="Biosynthetic arginine decarboxylase"/>
    <property type="match status" value="1"/>
</dbReference>
<dbReference type="Gene3D" id="1.10.287.3440">
    <property type="match status" value="1"/>
</dbReference>
<dbReference type="Gene3D" id="1.20.58.930">
    <property type="match status" value="1"/>
</dbReference>
<dbReference type="Gene3D" id="3.20.20.10">
    <property type="entry name" value="Alanine racemase"/>
    <property type="match status" value="1"/>
</dbReference>
<dbReference type="Gene3D" id="2.40.37.10">
    <property type="entry name" value="Lyase, Ornithine Decarboxylase, Chain A, domain 1"/>
    <property type="match status" value="1"/>
</dbReference>
<dbReference type="HAMAP" id="MF_01417">
    <property type="entry name" value="SpeA"/>
    <property type="match status" value="1"/>
</dbReference>
<dbReference type="InterPro" id="IPR009006">
    <property type="entry name" value="Ala_racemase/Decarboxylase_C"/>
</dbReference>
<dbReference type="InterPro" id="IPR040634">
    <property type="entry name" value="Arg_decarb_HB"/>
</dbReference>
<dbReference type="InterPro" id="IPR041128">
    <property type="entry name" value="Arg_decarbox_C"/>
</dbReference>
<dbReference type="InterPro" id="IPR002985">
    <property type="entry name" value="Arg_decrbxlase"/>
</dbReference>
<dbReference type="InterPro" id="IPR022657">
    <property type="entry name" value="De-COase2_CS"/>
</dbReference>
<dbReference type="InterPro" id="IPR022644">
    <property type="entry name" value="De-COase2_N"/>
</dbReference>
<dbReference type="InterPro" id="IPR022653">
    <property type="entry name" value="De-COase2_pyr-phos_BS"/>
</dbReference>
<dbReference type="InterPro" id="IPR000183">
    <property type="entry name" value="Orn/DAP/Arg_de-COase"/>
</dbReference>
<dbReference type="InterPro" id="IPR029066">
    <property type="entry name" value="PLP-binding_barrel"/>
</dbReference>
<dbReference type="NCBIfam" id="NF003763">
    <property type="entry name" value="PRK05354.1"/>
    <property type="match status" value="1"/>
</dbReference>
<dbReference type="NCBIfam" id="TIGR01273">
    <property type="entry name" value="speA"/>
    <property type="match status" value="1"/>
</dbReference>
<dbReference type="PANTHER" id="PTHR43295">
    <property type="entry name" value="ARGININE DECARBOXYLASE"/>
    <property type="match status" value="1"/>
</dbReference>
<dbReference type="PANTHER" id="PTHR43295:SF9">
    <property type="entry name" value="BIOSYNTHETIC ARGININE DECARBOXYLASE"/>
    <property type="match status" value="1"/>
</dbReference>
<dbReference type="Pfam" id="PF17810">
    <property type="entry name" value="Arg_decarb_HB"/>
    <property type="match status" value="1"/>
</dbReference>
<dbReference type="Pfam" id="PF17944">
    <property type="entry name" value="Arg_decarbox_C"/>
    <property type="match status" value="1"/>
</dbReference>
<dbReference type="Pfam" id="PF02784">
    <property type="entry name" value="Orn_Arg_deC_N"/>
    <property type="match status" value="1"/>
</dbReference>
<dbReference type="PIRSF" id="PIRSF001336">
    <property type="entry name" value="Arg_decrbxlase"/>
    <property type="match status" value="1"/>
</dbReference>
<dbReference type="PRINTS" id="PR01180">
    <property type="entry name" value="ARGDCRBXLASE"/>
</dbReference>
<dbReference type="PRINTS" id="PR01179">
    <property type="entry name" value="ODADCRBXLASE"/>
</dbReference>
<dbReference type="SUPFAM" id="SSF50621">
    <property type="entry name" value="Alanine racemase C-terminal domain-like"/>
    <property type="match status" value="1"/>
</dbReference>
<dbReference type="SUPFAM" id="SSF51419">
    <property type="entry name" value="PLP-binding barrel"/>
    <property type="match status" value="1"/>
</dbReference>
<dbReference type="PROSITE" id="PS00878">
    <property type="entry name" value="ODR_DC_2_1"/>
    <property type="match status" value="1"/>
</dbReference>
<dbReference type="PROSITE" id="PS00879">
    <property type="entry name" value="ODR_DC_2_2"/>
    <property type="match status" value="1"/>
</dbReference>
<comment type="function">
    <text evidence="1">Catalyzes the biosynthesis of agmatine from arginine.</text>
</comment>
<comment type="catalytic activity">
    <reaction evidence="1">
        <text>L-arginine + H(+) = agmatine + CO2</text>
        <dbReference type="Rhea" id="RHEA:17641"/>
        <dbReference type="ChEBI" id="CHEBI:15378"/>
        <dbReference type="ChEBI" id="CHEBI:16526"/>
        <dbReference type="ChEBI" id="CHEBI:32682"/>
        <dbReference type="ChEBI" id="CHEBI:58145"/>
        <dbReference type="EC" id="4.1.1.19"/>
    </reaction>
</comment>
<comment type="cofactor">
    <cofactor evidence="1">
        <name>Mg(2+)</name>
        <dbReference type="ChEBI" id="CHEBI:18420"/>
    </cofactor>
</comment>
<comment type="cofactor">
    <cofactor evidence="1">
        <name>pyridoxal 5'-phosphate</name>
        <dbReference type="ChEBI" id="CHEBI:597326"/>
    </cofactor>
</comment>
<comment type="similarity">
    <text evidence="1">Belongs to the Orn/Lys/Arg decarboxylase class-II family. SpeA subfamily.</text>
</comment>
<reference key="1">
    <citation type="journal article" date="2003" name="Science">
        <title>A genomic view of the human-Bacteroides thetaiotaomicron symbiosis.</title>
        <authorList>
            <person name="Xu J."/>
            <person name="Bjursell M.K."/>
            <person name="Himrod J."/>
            <person name="Deng S."/>
            <person name="Carmichael L.K."/>
            <person name="Chiang H.C."/>
            <person name="Hooper L.V."/>
            <person name="Gordon J.I."/>
        </authorList>
    </citation>
    <scope>NUCLEOTIDE SEQUENCE [LARGE SCALE GENOMIC DNA]</scope>
    <source>
        <strain>ATCC 29148 / DSM 2079 / JCM 5827 / CCUG 10774 / NCTC 10582 / VPI-5482 / E50</strain>
    </source>
</reference>
<evidence type="ECO:0000255" key="1">
    <source>
        <dbReference type="HAMAP-Rule" id="MF_01417"/>
    </source>
</evidence>
<name>SPEA_BACTN</name>
<protein>
    <recommendedName>
        <fullName evidence="1">Biosynthetic arginine decarboxylase</fullName>
        <shortName evidence="1">ADC</shortName>
        <ecNumber evidence="1">4.1.1.19</ecNumber>
    </recommendedName>
</protein>
<proteinExistence type="inferred from homology"/>
<keyword id="KW-0210">Decarboxylase</keyword>
<keyword id="KW-0456">Lyase</keyword>
<keyword id="KW-0460">Magnesium</keyword>
<keyword id="KW-0479">Metal-binding</keyword>
<keyword id="KW-0620">Polyamine biosynthesis</keyword>
<keyword id="KW-0663">Pyridoxal phosphate</keyword>
<keyword id="KW-1185">Reference proteome</keyword>
<keyword id="KW-0745">Spermidine biosynthesis</keyword>
<feature type="chain" id="PRO_0000149957" description="Biosynthetic arginine decarboxylase">
    <location>
        <begin position="1"/>
        <end position="630"/>
    </location>
</feature>
<feature type="binding site" evidence="1">
    <location>
        <begin position="281"/>
        <end position="291"/>
    </location>
    <ligand>
        <name>substrate</name>
    </ligand>
</feature>
<feature type="modified residue" description="N6-(pyridoxal phosphate)lysine" evidence="1">
    <location>
        <position position="99"/>
    </location>
</feature>
<sequence>MRKWRIEDSEELYNITGWGTSYFSINDAGHVVVTPRRDGVTVDLKELVDELQLRDVASPMLLRFPDILDNRIEKMSSCFKQAAEEYGYKAENFIIYPIKVNQMRPVVEEIISHGKKFNLGLEAGSKPELHAVIAVNTDSDSLIVCNGYKDESYIELALLAQKMGKRIFLVVEKMNELKLIAKMAKQLNVQPNIGIRIKLASSGSGKWEESGGDASKFGLTSSELLEALDFMESKGLKDCLKLIHFHIGSQVTKIRRIKTALREASQFYVQLHSMGFNVEFVDIGGGLGVDYDGTRSSNSEGSVNYSIQEYVNDSISTLVDVSDKNGIPHPNIITESGRALTAHHSVLIFEVLETATLPEWDDEEEIAPDAHELVQELYSIWDSLNQNKMLEAWHDAQQIREEALDLFSHGIVDLKTRAQIERLYWSITREINQIAGGLKHAPDEFRGLSKLLADKYFCNFSLFQSLPDSWAIDQIFPIMPIQRLDEKPERSATLQDITCDSDGKIANFISTRNVAHYLPVHSLKKTEPYYLAVFLVGAYQEILGDMHNLFGDTNAVHVSVNEKGYNIEQIIDGETVAEVLDYVQYNPKKLVRTLETWVTKSVKEGKISLEEGKEFLSNYRSGLYGYTYLE</sequence>
<organism>
    <name type="scientific">Bacteroides thetaiotaomicron (strain ATCC 29148 / DSM 2079 / JCM 5827 / CCUG 10774 / NCTC 10582 / VPI-5482 / E50)</name>
    <dbReference type="NCBI Taxonomy" id="226186"/>
    <lineage>
        <taxon>Bacteria</taxon>
        <taxon>Pseudomonadati</taxon>
        <taxon>Bacteroidota</taxon>
        <taxon>Bacteroidia</taxon>
        <taxon>Bacteroidales</taxon>
        <taxon>Bacteroidaceae</taxon>
        <taxon>Bacteroides</taxon>
    </lineage>
</organism>